<gene>
    <name evidence="1" type="primary">mtgA</name>
    <name type="ordered locus">Sfri_3569</name>
</gene>
<keyword id="KW-0997">Cell inner membrane</keyword>
<keyword id="KW-1003">Cell membrane</keyword>
<keyword id="KW-0133">Cell shape</keyword>
<keyword id="KW-0961">Cell wall biogenesis/degradation</keyword>
<keyword id="KW-0328">Glycosyltransferase</keyword>
<keyword id="KW-0472">Membrane</keyword>
<keyword id="KW-0573">Peptidoglycan synthesis</keyword>
<keyword id="KW-1185">Reference proteome</keyword>
<keyword id="KW-0808">Transferase</keyword>
<keyword id="KW-0812">Transmembrane</keyword>
<keyword id="KW-1133">Transmembrane helix</keyword>
<name>MTGA_SHEFN</name>
<dbReference type="EC" id="2.4.99.28" evidence="1"/>
<dbReference type="EMBL" id="CP000447">
    <property type="protein sequence ID" value="ABI73396.1"/>
    <property type="molecule type" value="Genomic_DNA"/>
</dbReference>
<dbReference type="RefSeq" id="WP_011638986.1">
    <property type="nucleotide sequence ID" value="NC_008345.1"/>
</dbReference>
<dbReference type="SMR" id="Q07X68"/>
<dbReference type="STRING" id="318167.Sfri_3569"/>
<dbReference type="CAZy" id="GT51">
    <property type="family name" value="Glycosyltransferase Family 51"/>
</dbReference>
<dbReference type="KEGG" id="sfr:Sfri_3569"/>
<dbReference type="eggNOG" id="COG0744">
    <property type="taxonomic scope" value="Bacteria"/>
</dbReference>
<dbReference type="HOGENOM" id="CLU_006354_1_1_6"/>
<dbReference type="OrthoDB" id="9766909at2"/>
<dbReference type="UniPathway" id="UPA00219"/>
<dbReference type="Proteomes" id="UP000000684">
    <property type="component" value="Chromosome"/>
</dbReference>
<dbReference type="GO" id="GO:0009274">
    <property type="term" value="C:peptidoglycan-based cell wall"/>
    <property type="evidence" value="ECO:0007669"/>
    <property type="project" value="InterPro"/>
</dbReference>
<dbReference type="GO" id="GO:0005886">
    <property type="term" value="C:plasma membrane"/>
    <property type="evidence" value="ECO:0007669"/>
    <property type="project" value="UniProtKB-SubCell"/>
</dbReference>
<dbReference type="GO" id="GO:0016763">
    <property type="term" value="F:pentosyltransferase activity"/>
    <property type="evidence" value="ECO:0007669"/>
    <property type="project" value="InterPro"/>
</dbReference>
<dbReference type="GO" id="GO:0008955">
    <property type="term" value="F:peptidoglycan glycosyltransferase activity"/>
    <property type="evidence" value="ECO:0007669"/>
    <property type="project" value="UniProtKB-UniRule"/>
</dbReference>
<dbReference type="GO" id="GO:0071555">
    <property type="term" value="P:cell wall organization"/>
    <property type="evidence" value="ECO:0007669"/>
    <property type="project" value="UniProtKB-KW"/>
</dbReference>
<dbReference type="GO" id="GO:0009252">
    <property type="term" value="P:peptidoglycan biosynthetic process"/>
    <property type="evidence" value="ECO:0007669"/>
    <property type="project" value="UniProtKB-UniRule"/>
</dbReference>
<dbReference type="GO" id="GO:0008360">
    <property type="term" value="P:regulation of cell shape"/>
    <property type="evidence" value="ECO:0007669"/>
    <property type="project" value="UniProtKB-KW"/>
</dbReference>
<dbReference type="Gene3D" id="1.10.3810.10">
    <property type="entry name" value="Biosynthetic peptidoglycan transglycosylase-like"/>
    <property type="match status" value="1"/>
</dbReference>
<dbReference type="HAMAP" id="MF_00766">
    <property type="entry name" value="PGT_MtgA"/>
    <property type="match status" value="1"/>
</dbReference>
<dbReference type="InterPro" id="IPR001264">
    <property type="entry name" value="Glyco_trans_51"/>
</dbReference>
<dbReference type="InterPro" id="IPR023346">
    <property type="entry name" value="Lysozyme-like_dom_sf"/>
</dbReference>
<dbReference type="InterPro" id="IPR036950">
    <property type="entry name" value="PBP_transglycosylase"/>
</dbReference>
<dbReference type="InterPro" id="IPR011812">
    <property type="entry name" value="Pep_trsgly"/>
</dbReference>
<dbReference type="NCBIfam" id="TIGR02070">
    <property type="entry name" value="mono_pep_trsgly"/>
    <property type="match status" value="1"/>
</dbReference>
<dbReference type="PANTHER" id="PTHR30400:SF0">
    <property type="entry name" value="BIOSYNTHETIC PEPTIDOGLYCAN TRANSGLYCOSYLASE"/>
    <property type="match status" value="1"/>
</dbReference>
<dbReference type="PANTHER" id="PTHR30400">
    <property type="entry name" value="MONOFUNCTIONAL BIOSYNTHETIC PEPTIDOGLYCAN TRANSGLYCOSYLASE"/>
    <property type="match status" value="1"/>
</dbReference>
<dbReference type="Pfam" id="PF00912">
    <property type="entry name" value="Transgly"/>
    <property type="match status" value="1"/>
</dbReference>
<dbReference type="SUPFAM" id="SSF53955">
    <property type="entry name" value="Lysozyme-like"/>
    <property type="match status" value="1"/>
</dbReference>
<comment type="function">
    <text evidence="1">Peptidoglycan polymerase that catalyzes glycan chain elongation from lipid-linked precursors.</text>
</comment>
<comment type="catalytic activity">
    <reaction evidence="1">
        <text>[GlcNAc-(1-&gt;4)-Mur2Ac(oyl-L-Ala-gamma-D-Glu-L-Lys-D-Ala-D-Ala)](n)-di-trans,octa-cis-undecaprenyl diphosphate + beta-D-GlcNAc-(1-&gt;4)-Mur2Ac(oyl-L-Ala-gamma-D-Glu-L-Lys-D-Ala-D-Ala)-di-trans,octa-cis-undecaprenyl diphosphate = [GlcNAc-(1-&gt;4)-Mur2Ac(oyl-L-Ala-gamma-D-Glu-L-Lys-D-Ala-D-Ala)](n+1)-di-trans,octa-cis-undecaprenyl diphosphate + di-trans,octa-cis-undecaprenyl diphosphate + H(+)</text>
        <dbReference type="Rhea" id="RHEA:23708"/>
        <dbReference type="Rhea" id="RHEA-COMP:9602"/>
        <dbReference type="Rhea" id="RHEA-COMP:9603"/>
        <dbReference type="ChEBI" id="CHEBI:15378"/>
        <dbReference type="ChEBI" id="CHEBI:58405"/>
        <dbReference type="ChEBI" id="CHEBI:60033"/>
        <dbReference type="ChEBI" id="CHEBI:78435"/>
        <dbReference type="EC" id="2.4.99.28"/>
    </reaction>
</comment>
<comment type="pathway">
    <text evidence="1">Cell wall biogenesis; peptidoglycan biosynthesis.</text>
</comment>
<comment type="subcellular location">
    <subcellularLocation>
        <location evidence="1">Cell inner membrane</location>
        <topology evidence="1">Single-pass membrane protein</topology>
    </subcellularLocation>
</comment>
<comment type="similarity">
    <text evidence="1">Belongs to the glycosyltransferase 51 family.</text>
</comment>
<evidence type="ECO:0000255" key="1">
    <source>
        <dbReference type="HAMAP-Rule" id="MF_00766"/>
    </source>
</evidence>
<accession>Q07X68</accession>
<organism>
    <name type="scientific">Shewanella frigidimarina (strain NCIMB 400)</name>
    <dbReference type="NCBI Taxonomy" id="318167"/>
    <lineage>
        <taxon>Bacteria</taxon>
        <taxon>Pseudomonadati</taxon>
        <taxon>Pseudomonadota</taxon>
        <taxon>Gammaproteobacteria</taxon>
        <taxon>Alteromonadales</taxon>
        <taxon>Shewanellaceae</taxon>
        <taxon>Shewanella</taxon>
    </lineage>
</organism>
<reference key="1">
    <citation type="submission" date="2006-08" db="EMBL/GenBank/DDBJ databases">
        <title>Complete sequence of Shewanella frigidimarina NCIMB 400.</title>
        <authorList>
            <consortium name="US DOE Joint Genome Institute"/>
            <person name="Copeland A."/>
            <person name="Lucas S."/>
            <person name="Lapidus A."/>
            <person name="Barry K."/>
            <person name="Detter J.C."/>
            <person name="Glavina del Rio T."/>
            <person name="Hammon N."/>
            <person name="Israni S."/>
            <person name="Dalin E."/>
            <person name="Tice H."/>
            <person name="Pitluck S."/>
            <person name="Fredrickson J.K."/>
            <person name="Kolker E."/>
            <person name="McCuel L.A."/>
            <person name="DiChristina T."/>
            <person name="Nealson K.H."/>
            <person name="Newman D."/>
            <person name="Tiedje J.M."/>
            <person name="Zhou J."/>
            <person name="Romine M.F."/>
            <person name="Culley D.E."/>
            <person name="Serres M."/>
            <person name="Chertkov O."/>
            <person name="Brettin T."/>
            <person name="Bruce D."/>
            <person name="Han C."/>
            <person name="Tapia R."/>
            <person name="Gilna P."/>
            <person name="Schmutz J."/>
            <person name="Larimer F."/>
            <person name="Land M."/>
            <person name="Hauser L."/>
            <person name="Kyrpides N."/>
            <person name="Mikhailova N."/>
            <person name="Richardson P."/>
        </authorList>
    </citation>
    <scope>NUCLEOTIDE SEQUENCE [LARGE SCALE GENOMIC DNA]</scope>
    <source>
        <strain>NCIMB 400</strain>
    </source>
</reference>
<feature type="chain" id="PRO_1000017317" description="Biosynthetic peptidoglycan transglycosylase">
    <location>
        <begin position="1"/>
        <end position="226"/>
    </location>
</feature>
<feature type="transmembrane region" description="Helical" evidence="1">
    <location>
        <begin position="8"/>
        <end position="28"/>
    </location>
</feature>
<sequence>MTDRKRGFFGWTWFVMWRFLLLLALLLLVLRFVPPPTTSFMLQSDYPVSQHWVSIDELPAHMPLAVVAAEDQLFPEHFGVDINSITKALNQYDDGEGLRGASTITQQTAKNLLLWPGRNFVRKGLEAMLAVSLEAIWGKKRILEVYLNVAEFGKGIYGVEAASQHYFNKSARYLSNNEAARLAVLLPSPRNRNPNNLTPYLRQRVAWGEKQMRQLGSGYLKPILTN</sequence>
<protein>
    <recommendedName>
        <fullName evidence="1">Biosynthetic peptidoglycan transglycosylase</fullName>
        <ecNumber evidence="1">2.4.99.28</ecNumber>
    </recommendedName>
    <alternativeName>
        <fullName evidence="1">Glycan polymerase</fullName>
    </alternativeName>
    <alternativeName>
        <fullName evidence="1">Peptidoglycan glycosyltransferase MtgA</fullName>
        <shortName evidence="1">PGT</shortName>
    </alternativeName>
</protein>
<proteinExistence type="inferred from homology"/>